<feature type="chain" id="PRO_0000107543" description="Acetate kinase">
    <location>
        <begin position="1"/>
        <end position="410"/>
    </location>
</feature>
<feature type="active site" description="Proton donor/acceptor" evidence="1">
    <location>
        <position position="145"/>
    </location>
</feature>
<feature type="binding site" evidence="1">
    <location>
        <position position="7"/>
    </location>
    <ligand>
        <name>Mg(2+)</name>
        <dbReference type="ChEBI" id="CHEBI:18420"/>
    </ligand>
</feature>
<feature type="binding site" evidence="1">
    <location>
        <position position="14"/>
    </location>
    <ligand>
        <name>ATP</name>
        <dbReference type="ChEBI" id="CHEBI:30616"/>
    </ligand>
</feature>
<feature type="binding site" evidence="1">
    <location>
        <position position="88"/>
    </location>
    <ligand>
        <name>substrate</name>
    </ligand>
</feature>
<feature type="binding site" evidence="1">
    <location>
        <begin position="203"/>
        <end position="207"/>
    </location>
    <ligand>
        <name>ATP</name>
        <dbReference type="ChEBI" id="CHEBI:30616"/>
    </ligand>
</feature>
<feature type="binding site" evidence="1">
    <location>
        <begin position="278"/>
        <end position="280"/>
    </location>
    <ligand>
        <name>ATP</name>
        <dbReference type="ChEBI" id="CHEBI:30616"/>
    </ligand>
</feature>
<feature type="binding site" evidence="1">
    <location>
        <begin position="326"/>
        <end position="330"/>
    </location>
    <ligand>
        <name>ATP</name>
        <dbReference type="ChEBI" id="CHEBI:30616"/>
    </ligand>
</feature>
<feature type="binding site" evidence="1">
    <location>
        <position position="379"/>
    </location>
    <ligand>
        <name>Mg(2+)</name>
        <dbReference type="ChEBI" id="CHEBI:18420"/>
    </ligand>
</feature>
<feature type="site" description="Transition state stabilizer" evidence="1">
    <location>
        <position position="177"/>
    </location>
</feature>
<feature type="site" description="Transition state stabilizer" evidence="1">
    <location>
        <position position="236"/>
    </location>
</feature>
<accession>O05278</accession>
<organism>
    <name type="scientific">Chlorante-Aster yellows phytoplasma</name>
    <dbReference type="NCBI Taxonomy" id="54389"/>
    <lineage>
        <taxon>Bacteria</taxon>
        <taxon>Bacillati</taxon>
        <taxon>Mycoplasmatota</taxon>
        <taxon>Mollicutes</taxon>
        <taxon>Acholeplasmatales</taxon>
        <taxon>Acholeplasmataceae</taxon>
        <taxon>Candidatus Phytoplasma</taxon>
    </lineage>
</organism>
<name>ACKA_CHAYP</name>
<evidence type="ECO:0000255" key="1">
    <source>
        <dbReference type="HAMAP-Rule" id="MF_00020"/>
    </source>
</evidence>
<dbReference type="EC" id="2.7.2.1" evidence="1"/>
<dbReference type="EMBL" id="U77617">
    <property type="protein sequence ID" value="AAB51345.1"/>
    <property type="molecule type" value="Genomic_DNA"/>
</dbReference>
<dbReference type="SMR" id="O05278"/>
<dbReference type="UniPathway" id="UPA00340">
    <property type="reaction ID" value="UER00458"/>
</dbReference>
<dbReference type="GO" id="GO:0005737">
    <property type="term" value="C:cytoplasm"/>
    <property type="evidence" value="ECO:0007669"/>
    <property type="project" value="UniProtKB-SubCell"/>
</dbReference>
<dbReference type="GO" id="GO:0008776">
    <property type="term" value="F:acetate kinase activity"/>
    <property type="evidence" value="ECO:0007669"/>
    <property type="project" value="UniProtKB-UniRule"/>
</dbReference>
<dbReference type="GO" id="GO:0005524">
    <property type="term" value="F:ATP binding"/>
    <property type="evidence" value="ECO:0007669"/>
    <property type="project" value="UniProtKB-KW"/>
</dbReference>
<dbReference type="GO" id="GO:0000287">
    <property type="term" value="F:magnesium ion binding"/>
    <property type="evidence" value="ECO:0007669"/>
    <property type="project" value="UniProtKB-UniRule"/>
</dbReference>
<dbReference type="GO" id="GO:0006083">
    <property type="term" value="P:acetate metabolic process"/>
    <property type="evidence" value="ECO:0007669"/>
    <property type="project" value="TreeGrafter"/>
</dbReference>
<dbReference type="GO" id="GO:0006085">
    <property type="term" value="P:acetyl-CoA biosynthetic process"/>
    <property type="evidence" value="ECO:0007669"/>
    <property type="project" value="UniProtKB-UniRule"/>
</dbReference>
<dbReference type="CDD" id="cd24010">
    <property type="entry name" value="ASKHA_NBD_AcK_PK"/>
    <property type="match status" value="1"/>
</dbReference>
<dbReference type="Gene3D" id="3.30.420.40">
    <property type="match status" value="2"/>
</dbReference>
<dbReference type="HAMAP" id="MF_00020">
    <property type="entry name" value="Acetate_kinase"/>
    <property type="match status" value="1"/>
</dbReference>
<dbReference type="InterPro" id="IPR004372">
    <property type="entry name" value="Ac/propionate_kinase"/>
</dbReference>
<dbReference type="InterPro" id="IPR000890">
    <property type="entry name" value="Aliphatic_acid_kin_short-chain"/>
</dbReference>
<dbReference type="InterPro" id="IPR023865">
    <property type="entry name" value="Aliphatic_acid_kinase_CS"/>
</dbReference>
<dbReference type="InterPro" id="IPR043129">
    <property type="entry name" value="ATPase_NBD"/>
</dbReference>
<dbReference type="NCBIfam" id="TIGR00016">
    <property type="entry name" value="ackA"/>
    <property type="match status" value="1"/>
</dbReference>
<dbReference type="PANTHER" id="PTHR21060">
    <property type="entry name" value="ACETATE KINASE"/>
    <property type="match status" value="1"/>
</dbReference>
<dbReference type="PANTHER" id="PTHR21060:SF15">
    <property type="entry name" value="ACETATE KINASE-RELATED"/>
    <property type="match status" value="1"/>
</dbReference>
<dbReference type="Pfam" id="PF00871">
    <property type="entry name" value="Acetate_kinase"/>
    <property type="match status" value="1"/>
</dbReference>
<dbReference type="PIRSF" id="PIRSF000722">
    <property type="entry name" value="Acetate_prop_kin"/>
    <property type="match status" value="1"/>
</dbReference>
<dbReference type="PRINTS" id="PR00471">
    <property type="entry name" value="ACETATEKNASE"/>
</dbReference>
<dbReference type="SUPFAM" id="SSF53067">
    <property type="entry name" value="Actin-like ATPase domain"/>
    <property type="match status" value="2"/>
</dbReference>
<dbReference type="PROSITE" id="PS01075">
    <property type="entry name" value="ACETATE_KINASE_1"/>
    <property type="match status" value="1"/>
</dbReference>
<dbReference type="PROSITE" id="PS01076">
    <property type="entry name" value="ACETATE_KINASE_2"/>
    <property type="match status" value="1"/>
</dbReference>
<keyword id="KW-0067">ATP-binding</keyword>
<keyword id="KW-0963">Cytoplasm</keyword>
<keyword id="KW-0418">Kinase</keyword>
<keyword id="KW-0460">Magnesium</keyword>
<keyword id="KW-0479">Metal-binding</keyword>
<keyword id="KW-0547">Nucleotide-binding</keyword>
<keyword id="KW-0808">Transferase</keyword>
<comment type="function">
    <text evidence="1">Catalyzes the formation of acetyl phosphate from acetate and ATP. Can also catalyze the reverse reaction.</text>
</comment>
<comment type="catalytic activity">
    <reaction evidence="1">
        <text>acetate + ATP = acetyl phosphate + ADP</text>
        <dbReference type="Rhea" id="RHEA:11352"/>
        <dbReference type="ChEBI" id="CHEBI:22191"/>
        <dbReference type="ChEBI" id="CHEBI:30089"/>
        <dbReference type="ChEBI" id="CHEBI:30616"/>
        <dbReference type="ChEBI" id="CHEBI:456216"/>
        <dbReference type="EC" id="2.7.2.1"/>
    </reaction>
</comment>
<comment type="cofactor">
    <cofactor evidence="1">
        <name>Mg(2+)</name>
        <dbReference type="ChEBI" id="CHEBI:18420"/>
    </cofactor>
    <cofactor evidence="1">
        <name>Mn(2+)</name>
        <dbReference type="ChEBI" id="CHEBI:29035"/>
    </cofactor>
    <text evidence="1">Mg(2+). Can also accept Mn(2+).</text>
</comment>
<comment type="pathway">
    <text evidence="1">Metabolic intermediate biosynthesis; acetyl-CoA biosynthesis; acetyl-CoA from acetate: step 1/2.</text>
</comment>
<comment type="subunit">
    <text evidence="1">Homodimer.</text>
</comment>
<comment type="subcellular location">
    <subcellularLocation>
        <location evidence="1">Cytoplasm</location>
    </subcellularLocation>
</comment>
<comment type="similarity">
    <text evidence="1">Belongs to the acetokinase family.</text>
</comment>
<sequence length="410" mass="45313">MKIMSVNSGSSSLKFQLLEMPQQEVIVSGLVERIGSNQAVFTMKTKDKKDKQVLEVLNHQTAVELLLDALIQKKVINTLEEIEGVGHRVVQGGEIFSDSAVLTEKTLAQIESLCDLAPLHNPANIISIKAFQKVLPQVFQVAVFDTTFHQSMPAVNFLYATPYYWYQKYQIRKYGAHGTSYKYITEQMQQILGKKNAKIIICHAGNGVSLCAVDSGKSVDTSMGFTPLEGVPMGTRSGNIDPAVVKFIAEKENKTVACVIDDLNKKSGYLGVSGISNDTRDILASIKEGNQQAILSHDIQVKRIVDYIASYYVLLKGVDALVFTAGIGENSSFFRSEIIKRLSVLGIKLDEEKNKVQGKQELITTFDSAIKAFVVPTNEELAIAQDVLRLQQNQTNQDKDDQQECFCCCG</sequence>
<protein>
    <recommendedName>
        <fullName evidence="1">Acetate kinase</fullName>
        <ecNumber evidence="1">2.7.2.1</ecNumber>
    </recommendedName>
    <alternativeName>
        <fullName evidence="1">Acetokinase</fullName>
    </alternativeName>
</protein>
<gene>
    <name evidence="1" type="primary">ackA</name>
</gene>
<proteinExistence type="inferred from homology"/>
<reference key="1">
    <citation type="submission" date="1996-11" db="EMBL/GenBank/DDBJ databases">
        <title>Phytoplasma acetate kinase.</title>
        <authorList>
            <person name="Carder J.H."/>
            <person name="Barbara D.J."/>
            <person name="Davies D.L."/>
            <person name="Clarke M.F."/>
        </authorList>
    </citation>
    <scope>NUCLEOTIDE SEQUENCE [GENOMIC DNA]</scope>
</reference>